<evidence type="ECO:0000250" key="1">
    <source>
        <dbReference type="UniProtKB" id="P04633"/>
    </source>
</evidence>
<evidence type="ECO:0000250" key="2">
    <source>
        <dbReference type="UniProtKB" id="P12242"/>
    </source>
</evidence>
<evidence type="ECO:0000250" key="3">
    <source>
        <dbReference type="UniProtKB" id="P25874"/>
    </source>
</evidence>
<evidence type="ECO:0000250" key="4">
    <source>
        <dbReference type="UniProtKB" id="W5PSH7"/>
    </source>
</evidence>
<evidence type="ECO:0000255" key="5"/>
<evidence type="ECO:0000269" key="6">
    <source>
    </source>
</evidence>
<evidence type="ECO:0000269" key="7">
    <source>
    </source>
</evidence>
<evidence type="ECO:0000269" key="8">
    <source>
    </source>
</evidence>
<evidence type="ECO:0000303" key="9">
    <source>
    </source>
</evidence>
<evidence type="ECO:0000303" key="10">
    <source>
    </source>
</evidence>
<evidence type="ECO:0000305" key="11"/>
<reference key="1">
    <citation type="submission" date="1993-06" db="EMBL/GenBank/DDBJ databases">
        <authorList>
            <person name="Raimbault S."/>
            <person name="Prieto S."/>
            <person name="Rial E."/>
            <person name="Bouillaud F."/>
        </authorList>
    </citation>
    <scope>NUCLEOTIDE SEQUENCE [MRNA]</scope>
    <source>
        <tissue>Brown adipose tissue</tissue>
    </source>
</reference>
<reference key="2">
    <citation type="journal article" date="1985" name="EMBO J.">
        <title>The uncoupling protein from brown fat mitochondria is related to the mitochondrial ADP/ATP carrier. Analysis of sequence homologies and of folding of the protein in the membrane.</title>
        <authorList>
            <person name="Aquila H."/>
            <person name="Link T.A."/>
            <person name="Klingenberg M."/>
        </authorList>
    </citation>
    <scope>PROTEIN SEQUENCE OF 2-307</scope>
</reference>
<reference key="3">
    <citation type="journal article" date="1992" name="Eur. J. Biochem.">
        <title>Photoaffinity labeling of the nucleotide-binding site of the uncoupling protein from hamster brown adipose tissue.</title>
        <authorList>
            <person name="Winkler E."/>
            <person name="Klingenberg M."/>
        </authorList>
    </citation>
    <scope>PROTEIN SEQUENCE OF 257-307</scope>
    <scope>SUBUNIT</scope>
</reference>
<reference key="4">
    <citation type="journal article" date="1982" name="FEBS Lett.">
        <title>Exclusive occurrence of thermogenin antigen in brown adipose tissue.</title>
        <authorList>
            <person name="Cannon B."/>
            <person name="Hedin A."/>
            <person name="Nedergaard J."/>
        </authorList>
    </citation>
    <scope>IDENTIFICATION</scope>
    <scope>TISSUE SPECIFICITY</scope>
</reference>
<proteinExistence type="evidence at protein level"/>
<name>UCP1_MESAU</name>
<sequence>MVNPTTSEVHPTMGVKIFSAGVAACLADIITFPLDTAKVRLQIQGEGQISSTIRYKGVLGTITTLAKTEGLPKLYSGLPAGIQRQISFASLRIGLYDTVQEYFSSGKETPPTLGNRISAGLMTGGVAVFIGQPTEVVKVRLQAQSHLHGIKPRYTGTYNAYRIIATTESFSTLWKGTTPNLLRNVIINCVELVTYDLMKGALVNNQILADDVPCHLLSAFVAGFCTTFLASPADVVKTRFINSLPGQYPSVPSCAMTMLTKEGPTAFFKGFVPSFLRLASWNVIMFVCFEQLKKELSKSRQTVDCTT</sequence>
<organism>
    <name type="scientific">Mesocricetus auratus</name>
    <name type="common">Golden hamster</name>
    <dbReference type="NCBI Taxonomy" id="10036"/>
    <lineage>
        <taxon>Eukaryota</taxon>
        <taxon>Metazoa</taxon>
        <taxon>Chordata</taxon>
        <taxon>Craniata</taxon>
        <taxon>Vertebrata</taxon>
        <taxon>Euteleostomi</taxon>
        <taxon>Mammalia</taxon>
        <taxon>Eutheria</taxon>
        <taxon>Euarchontoglires</taxon>
        <taxon>Glires</taxon>
        <taxon>Rodentia</taxon>
        <taxon>Myomorpha</taxon>
        <taxon>Muroidea</taxon>
        <taxon>Cricetidae</taxon>
        <taxon>Cricetinae</taxon>
        <taxon>Mesocricetus</taxon>
    </lineage>
</organism>
<gene>
    <name evidence="3" type="primary">UCP1</name>
    <name evidence="3" type="synonym">SLC25A7</name>
    <name evidence="9" type="synonym">UCP</name>
</gene>
<dbReference type="EMBL" id="X73138">
    <property type="protein sequence ID" value="CAA51653.1"/>
    <property type="molecule type" value="mRNA"/>
</dbReference>
<dbReference type="PIR" id="S34268">
    <property type="entry name" value="S34268"/>
</dbReference>
<dbReference type="RefSeq" id="NP_001268261.1">
    <property type="nucleotide sequence ID" value="NM_001281332.1"/>
</dbReference>
<dbReference type="SMR" id="P04575"/>
<dbReference type="GeneID" id="101835783"/>
<dbReference type="KEGG" id="maua:101835783"/>
<dbReference type="CTD" id="7350"/>
<dbReference type="OrthoDB" id="448427at2759"/>
<dbReference type="Proteomes" id="UP000189706">
    <property type="component" value="Unplaced"/>
</dbReference>
<dbReference type="GO" id="GO:0005743">
    <property type="term" value="C:mitochondrial inner membrane"/>
    <property type="evidence" value="ECO:0000250"/>
    <property type="project" value="UniProtKB"/>
</dbReference>
<dbReference type="GO" id="GO:1901612">
    <property type="term" value="F:cardiolipin binding"/>
    <property type="evidence" value="ECO:0000250"/>
    <property type="project" value="UniProtKB"/>
</dbReference>
<dbReference type="GO" id="GO:0036041">
    <property type="term" value="F:long-chain fatty acid binding"/>
    <property type="evidence" value="ECO:0000250"/>
    <property type="project" value="UniProtKB"/>
</dbReference>
<dbReference type="GO" id="GO:0017077">
    <property type="term" value="F:oxidative phosphorylation uncoupler activity"/>
    <property type="evidence" value="ECO:0000250"/>
    <property type="project" value="UniProtKB"/>
</dbReference>
<dbReference type="GO" id="GO:0032555">
    <property type="term" value="F:purine ribonucleotide binding"/>
    <property type="evidence" value="ECO:0000250"/>
    <property type="project" value="UniProtKB"/>
</dbReference>
<dbReference type="GO" id="GO:1990845">
    <property type="term" value="P:adaptive thermogenesis"/>
    <property type="evidence" value="ECO:0000250"/>
    <property type="project" value="UniProtKB"/>
</dbReference>
<dbReference type="GO" id="GO:0071398">
    <property type="term" value="P:cellular response to fatty acid"/>
    <property type="evidence" value="ECO:0000250"/>
    <property type="project" value="UniProtKB"/>
</dbReference>
<dbReference type="GO" id="GO:0032870">
    <property type="term" value="P:cellular response to hormone stimulus"/>
    <property type="evidence" value="ECO:0000250"/>
    <property type="project" value="UniProtKB"/>
</dbReference>
<dbReference type="GO" id="GO:0034614">
    <property type="term" value="P:cellular response to reactive oxygen species"/>
    <property type="evidence" value="ECO:0000250"/>
    <property type="project" value="UniProtKB"/>
</dbReference>
<dbReference type="GO" id="GO:1990542">
    <property type="term" value="P:mitochondrial transmembrane transport"/>
    <property type="evidence" value="ECO:0000250"/>
    <property type="project" value="UniProtKB"/>
</dbReference>
<dbReference type="GO" id="GO:1902600">
    <property type="term" value="P:proton transmembrane transport"/>
    <property type="evidence" value="ECO:0000250"/>
    <property type="project" value="UniProtKB"/>
</dbReference>
<dbReference type="GO" id="GO:1903426">
    <property type="term" value="P:regulation of reactive oxygen species biosynthetic process"/>
    <property type="evidence" value="ECO:0000250"/>
    <property type="project" value="UniProtKB"/>
</dbReference>
<dbReference type="GO" id="GO:0031667">
    <property type="term" value="P:response to nutrient levels"/>
    <property type="evidence" value="ECO:0000250"/>
    <property type="project" value="UniProtKB"/>
</dbReference>
<dbReference type="GO" id="GO:0009266">
    <property type="term" value="P:response to temperature stimulus"/>
    <property type="evidence" value="ECO:0000250"/>
    <property type="project" value="UniProtKB"/>
</dbReference>
<dbReference type="FunFam" id="1.50.40.10:FF:000068">
    <property type="entry name" value="Mitochondrial brown fat uncoupling protein 1"/>
    <property type="match status" value="1"/>
</dbReference>
<dbReference type="Gene3D" id="1.50.40.10">
    <property type="entry name" value="Mitochondrial carrier domain"/>
    <property type="match status" value="1"/>
</dbReference>
<dbReference type="InterPro" id="IPR002067">
    <property type="entry name" value="Mit_carrier"/>
</dbReference>
<dbReference type="InterPro" id="IPR050391">
    <property type="entry name" value="Mito_Metabolite_Transporter"/>
</dbReference>
<dbReference type="InterPro" id="IPR018108">
    <property type="entry name" value="Mitochondrial_sb/sol_carrier"/>
</dbReference>
<dbReference type="InterPro" id="IPR023395">
    <property type="entry name" value="Mt_carrier_dom_sf"/>
</dbReference>
<dbReference type="PANTHER" id="PTHR45618">
    <property type="entry name" value="MITOCHONDRIAL DICARBOXYLATE CARRIER-RELATED"/>
    <property type="match status" value="1"/>
</dbReference>
<dbReference type="Pfam" id="PF00153">
    <property type="entry name" value="Mito_carr"/>
    <property type="match status" value="3"/>
</dbReference>
<dbReference type="PRINTS" id="PR00784">
    <property type="entry name" value="MTUNCOUPLING"/>
</dbReference>
<dbReference type="SUPFAM" id="SSF103506">
    <property type="entry name" value="Mitochondrial carrier"/>
    <property type="match status" value="1"/>
</dbReference>
<dbReference type="PROSITE" id="PS50920">
    <property type="entry name" value="SOLCAR"/>
    <property type="match status" value="3"/>
</dbReference>
<accession>P04575</accession>
<comment type="function">
    <text evidence="2">Mitochondrial protein responsible for thermogenic respiration, a specialized capacity of brown adipose tissue and beige fat that participates in non-shivering adaptive thermogenesis to temperature and diet variations and more generally to the regulation of energy balance. Functions as a long-chain fatty acid/LCFA and proton symporter, simultaneously transporting one LCFA and one proton through the inner mitochondrial membrane. However, LCFAs remaining associated with the transporter via their hydrophobic tails, it results in an apparent transport of protons activated by LCFAs. Thereby, dissipates the mitochondrial proton gradient and converts the energy of substrate oxydation into heat instead of ATP. Regulates the production of reactive oxygen species/ROS by mitochondria.</text>
</comment>
<comment type="catalytic activity">
    <reaction evidence="3">
        <text>H(+)(in) = H(+)(out)</text>
        <dbReference type="Rhea" id="RHEA:34979"/>
        <dbReference type="ChEBI" id="CHEBI:15378"/>
    </reaction>
</comment>
<comment type="activity regulation">
    <text evidence="2">Has no constitutive proton transporter activity and has to be activated by long-chain fatty acids/LCFAs. Inhibited by purine nucleotides. Both purine nucleotides and LCFAs bind the cytosolic side of the transporter and directly compete to activate or inhibit it. Activated by noradrenaline and reactive oxygen species. Despite lacking canonical translational encoding for selenocysteine, a small pool of the protein has been observed to selectively incorporate selenocysteine at 'Cys-254'. Selenocysteine-modified protein is highly sensitive to redox modification and may constitute a pool of protein highly sensitive to activation by elevated levels of reactive oxygen species (ROS).</text>
</comment>
<comment type="subunit">
    <text evidence="4 6">Most probably functions as a monomer. Binds one purine nucleotide per monomer (By similarity). However, has also been suggested to function as a homodimer or a homotetramer (PubMed:1730236). Tightly associates with cardiolipin in the mitochondrion inner membrane; may stabilize and regulate its activity (By similarity).</text>
</comment>
<comment type="subcellular location">
    <subcellularLocation>
        <location evidence="2">Mitochondrion inner membrane</location>
        <topology evidence="1">Multi-pass membrane protein</topology>
    </subcellularLocation>
</comment>
<comment type="tissue specificity">
    <text evidence="8">Brown adipose tissue.</text>
</comment>
<comment type="PTM">
    <text evidence="2">May undergo sulfenylation upon cold exposure. May increase the sensitivity of UCP1 thermogenic function to the activation by noradrenaline probably through structural effects.</text>
</comment>
<comment type="PTM">
    <text evidence="1">May undergo ubiquitin-mediated proteasomal degradation.</text>
</comment>
<comment type="similarity">
    <text evidence="11">Belongs to the mitochondrial carrier (TC 2.A.29) family.</text>
</comment>
<feature type="initiator methionine" description="Removed" evidence="7">
    <location>
        <position position="1"/>
    </location>
</feature>
<feature type="chain" id="PRO_0000090658" description="Mitochondrial brown fat uncoupling protein 1">
    <location>
        <begin position="2"/>
        <end position="307"/>
    </location>
</feature>
<feature type="topological domain" description="Mitochondrial intermembrane" evidence="1">
    <location>
        <begin position="2"/>
        <end position="10"/>
    </location>
</feature>
<feature type="transmembrane region" description="Helical; Name=1" evidence="5">
    <location>
        <begin position="11"/>
        <end position="32"/>
    </location>
</feature>
<feature type="topological domain" description="Mitochondrial matrix" evidence="1">
    <location>
        <begin position="33"/>
        <end position="73"/>
    </location>
</feature>
<feature type="transmembrane region" description="Helical; Name=2" evidence="5">
    <location>
        <begin position="74"/>
        <end position="96"/>
    </location>
</feature>
<feature type="topological domain" description="Mitochondrial intermembrane" evidence="1">
    <location>
        <begin position="97"/>
        <end position="116"/>
    </location>
</feature>
<feature type="transmembrane region" description="Helical; Name=3" evidence="5">
    <location>
        <begin position="117"/>
        <end position="133"/>
    </location>
</feature>
<feature type="topological domain" description="Mitochondrial matrix" evidence="1">
    <location>
        <begin position="134"/>
        <end position="178"/>
    </location>
</feature>
<feature type="transmembrane region" description="Helical; Name=4" evidence="5">
    <location>
        <begin position="179"/>
        <end position="195"/>
    </location>
</feature>
<feature type="topological domain" description="Mitochondrial intermembrane" evidence="1">
    <location>
        <begin position="196"/>
        <end position="212"/>
    </location>
</feature>
<feature type="transmembrane region" description="Helical; Name=5" evidence="5">
    <location>
        <begin position="213"/>
        <end position="232"/>
    </location>
</feature>
<feature type="topological domain" description="Mitochondrial matrix" evidence="1">
    <location>
        <begin position="233"/>
        <end position="266"/>
    </location>
</feature>
<feature type="transmembrane region" description="Helical; Name=6" evidence="5">
    <location>
        <begin position="267"/>
        <end position="289"/>
    </location>
</feature>
<feature type="topological domain" description="Mitochondrial intermembrane" evidence="1">
    <location>
        <begin position="290"/>
        <end position="307"/>
    </location>
</feature>
<feature type="repeat" description="Solcar 1">
    <location>
        <begin position="11"/>
        <end position="102"/>
    </location>
</feature>
<feature type="repeat" description="Solcar 2">
    <location>
        <begin position="111"/>
        <end position="201"/>
    </location>
</feature>
<feature type="repeat" description="Solcar 3">
    <location>
        <begin position="210"/>
        <end position="295"/>
    </location>
</feature>
<feature type="binding site" evidence="3">
    <location>
        <position position="56"/>
    </location>
    <ligand>
        <name>fatty acid 16:0</name>
        <dbReference type="ChEBI" id="CHEBI:78123"/>
    </ligand>
</feature>
<feature type="binding site" evidence="3">
    <location>
        <position position="269"/>
    </location>
    <ligand>
        <name>fatty acid 16:0</name>
        <dbReference type="ChEBI" id="CHEBI:78123"/>
    </ligand>
</feature>
<feature type="modified residue" description="Cysteine sulfenic acid (-SOH)" evidence="2">
    <location>
        <position position="254"/>
    </location>
</feature>
<feature type="sequence conflict" description="In Ref. 2; AA sequence." evidence="11" ref="2">
    <original>F</original>
    <variation>L</variation>
    <location>
        <position position="129"/>
    </location>
</feature>
<keyword id="KW-0903">Direct protein sequencing</keyword>
<keyword id="KW-0407">Ion channel</keyword>
<keyword id="KW-0406">Ion transport</keyword>
<keyword id="KW-0472">Membrane</keyword>
<keyword id="KW-0496">Mitochondrion</keyword>
<keyword id="KW-0999">Mitochondrion inner membrane</keyword>
<keyword id="KW-0558">Oxidation</keyword>
<keyword id="KW-1185">Reference proteome</keyword>
<keyword id="KW-0677">Repeat</keyword>
<keyword id="KW-0812">Transmembrane</keyword>
<keyword id="KW-1133">Transmembrane helix</keyword>
<keyword id="KW-0813">Transport</keyword>
<protein>
    <recommendedName>
        <fullName evidence="11">Mitochondrial brown fat uncoupling protein 1</fullName>
        <shortName evidence="11">UCP 1</shortName>
    </recommendedName>
    <alternativeName>
        <fullName evidence="3">Solute carrier family 25 member 7</fullName>
    </alternativeName>
    <alternativeName>
        <fullName evidence="10">Thermogenin</fullName>
    </alternativeName>
</protein>